<protein>
    <recommendedName>
        <fullName evidence="1">Fluoride-specific ion channel FluC</fullName>
    </recommendedName>
</protein>
<accession>Q93TE2</accession>
<name>FLUC_PSEYM</name>
<evidence type="ECO:0000255" key="1">
    <source>
        <dbReference type="HAMAP-Rule" id="MF_00454"/>
    </source>
</evidence>
<gene>
    <name evidence="1" type="primary">fluC</name>
    <name evidence="1" type="synonym">crcB</name>
</gene>
<proteinExistence type="inferred from homology"/>
<organism>
    <name type="scientific">Pseudomonas syringae pv. maculicola</name>
    <dbReference type="NCBI Taxonomy" id="59511"/>
    <lineage>
        <taxon>Bacteria</taxon>
        <taxon>Pseudomonadati</taxon>
        <taxon>Pseudomonadota</taxon>
        <taxon>Gammaproteobacteria</taxon>
        <taxon>Pseudomonadales</taxon>
        <taxon>Pseudomonadaceae</taxon>
        <taxon>Pseudomonas</taxon>
    </lineage>
</organism>
<comment type="function">
    <text evidence="1">Fluoride-specific ion channel. Important for reducing fluoride concentration in the cell, thus reducing its toxicity.</text>
</comment>
<comment type="catalytic activity">
    <reaction evidence="1">
        <text>fluoride(in) = fluoride(out)</text>
        <dbReference type="Rhea" id="RHEA:76159"/>
        <dbReference type="ChEBI" id="CHEBI:17051"/>
    </reaction>
    <physiologicalReaction direction="left-to-right" evidence="1">
        <dbReference type="Rhea" id="RHEA:76160"/>
    </physiologicalReaction>
</comment>
<comment type="activity regulation">
    <text evidence="1">Na(+) is not transported, but it plays an essential structural role and its presence is essential for fluoride channel function.</text>
</comment>
<comment type="subcellular location">
    <subcellularLocation>
        <location evidence="1">Cell inner membrane</location>
        <topology evidence="1">Multi-pass membrane protein</topology>
    </subcellularLocation>
</comment>
<comment type="similarity">
    <text evidence="1">Belongs to the fluoride channel Fluc/FEX (TC 1.A.43) family.</text>
</comment>
<keyword id="KW-0997">Cell inner membrane</keyword>
<keyword id="KW-1003">Cell membrane</keyword>
<keyword id="KW-0407">Ion channel</keyword>
<keyword id="KW-0406">Ion transport</keyword>
<keyword id="KW-0472">Membrane</keyword>
<keyword id="KW-0479">Metal-binding</keyword>
<keyword id="KW-0614">Plasmid</keyword>
<keyword id="KW-0915">Sodium</keyword>
<keyword id="KW-0812">Transmembrane</keyword>
<keyword id="KW-1133">Transmembrane helix</keyword>
<keyword id="KW-0813">Transport</keyword>
<feature type="chain" id="PRO_0000110160" description="Fluoride-specific ion channel FluC">
    <location>
        <begin position="1"/>
        <end position="127"/>
    </location>
</feature>
<feature type="transmembrane region" description="Helical" evidence="1">
    <location>
        <begin position="4"/>
        <end position="24"/>
    </location>
</feature>
<feature type="transmembrane region" description="Helical" evidence="1">
    <location>
        <begin position="37"/>
        <end position="57"/>
    </location>
</feature>
<feature type="transmembrane region" description="Helical" evidence="1">
    <location>
        <begin position="68"/>
        <end position="88"/>
    </location>
</feature>
<feature type="transmembrane region" description="Helical" evidence="1">
    <location>
        <begin position="96"/>
        <end position="116"/>
    </location>
</feature>
<feature type="binding site" evidence="1">
    <location>
        <position position="75"/>
    </location>
    <ligand>
        <name>Na(+)</name>
        <dbReference type="ChEBI" id="CHEBI:29101"/>
        <note>structural</note>
    </ligand>
</feature>
<feature type="binding site" evidence="1">
    <location>
        <position position="78"/>
    </location>
    <ligand>
        <name>Na(+)</name>
        <dbReference type="ChEBI" id="CHEBI:29101"/>
        <note>structural</note>
    </ligand>
</feature>
<reference key="1">
    <citation type="journal article" date="2003" name="Mol. Microbiol.">
        <title>Nucleotide sequence, functional characterization and evolution of pFKN, a virulence plasmid in Pseudomonas syringae pathovar maculicola.</title>
        <authorList>
            <person name="Rohmer L."/>
            <person name="Kjemtrup S."/>
            <person name="Marchesini P."/>
            <person name="Dangl J.L."/>
        </authorList>
    </citation>
    <scope>NUCLEOTIDE SEQUENCE [GENOMIC DNA]</scope>
    <source>
        <strain>M6</strain>
    </source>
</reference>
<sequence>MLKSLLVIAIGASLGAWLRWLLGMKLNALFPTIPPGTVVANMVGGYIIGLAIAFLAASPSLSPEWRLLIITGFCGGLTTFSTFSAETVALIQEGRLLWALGSISLHVVGSLAMTAAGLLSYQMIGTR</sequence>
<geneLocation type="plasmid">
    <name>pFKN</name>
</geneLocation>
<dbReference type="EMBL" id="AF359557">
    <property type="protein sequence ID" value="AAK49548.1"/>
    <property type="molecule type" value="Genomic_DNA"/>
</dbReference>
<dbReference type="RefSeq" id="NP_114206.1">
    <property type="nucleotide sequence ID" value="NC_002759.1"/>
</dbReference>
<dbReference type="RefSeq" id="WP_010924788.1">
    <property type="nucleotide sequence ID" value="NZ_LJQR01000061.1"/>
</dbReference>
<dbReference type="SMR" id="Q93TE2"/>
<dbReference type="GeneID" id="47762280"/>
<dbReference type="GO" id="GO:0005886">
    <property type="term" value="C:plasma membrane"/>
    <property type="evidence" value="ECO:0007669"/>
    <property type="project" value="UniProtKB-SubCell"/>
</dbReference>
<dbReference type="GO" id="GO:0062054">
    <property type="term" value="F:fluoride channel activity"/>
    <property type="evidence" value="ECO:0007669"/>
    <property type="project" value="UniProtKB-UniRule"/>
</dbReference>
<dbReference type="GO" id="GO:0046872">
    <property type="term" value="F:metal ion binding"/>
    <property type="evidence" value="ECO:0007669"/>
    <property type="project" value="UniProtKB-KW"/>
</dbReference>
<dbReference type="GO" id="GO:0140114">
    <property type="term" value="P:cellular detoxification of fluoride"/>
    <property type="evidence" value="ECO:0007669"/>
    <property type="project" value="UniProtKB-UniRule"/>
</dbReference>
<dbReference type="HAMAP" id="MF_00454">
    <property type="entry name" value="FluC"/>
    <property type="match status" value="1"/>
</dbReference>
<dbReference type="InterPro" id="IPR003691">
    <property type="entry name" value="FluC"/>
</dbReference>
<dbReference type="NCBIfam" id="TIGR00494">
    <property type="entry name" value="crcB"/>
    <property type="match status" value="1"/>
</dbReference>
<dbReference type="NCBIfam" id="NF010792">
    <property type="entry name" value="PRK14196.1"/>
    <property type="match status" value="1"/>
</dbReference>
<dbReference type="PANTHER" id="PTHR28259">
    <property type="entry name" value="FLUORIDE EXPORT PROTEIN 1-RELATED"/>
    <property type="match status" value="1"/>
</dbReference>
<dbReference type="PANTHER" id="PTHR28259:SF1">
    <property type="entry name" value="FLUORIDE EXPORT PROTEIN 1-RELATED"/>
    <property type="match status" value="1"/>
</dbReference>
<dbReference type="Pfam" id="PF02537">
    <property type="entry name" value="CRCB"/>
    <property type="match status" value="1"/>
</dbReference>